<keyword id="KW-0002">3D-structure</keyword>
<keyword id="KW-0025">Alternative splicing</keyword>
<keyword id="KW-1003">Cell membrane</keyword>
<keyword id="KW-0903">Direct protein sequencing</keyword>
<keyword id="KW-0225">Disease variant</keyword>
<keyword id="KW-1015">Disulfide bond</keyword>
<keyword id="KW-0325">Glycoprotein</keyword>
<keyword id="KW-0336">GPI-anchor</keyword>
<keyword id="KW-0357">Heparan sulfate</keyword>
<keyword id="KW-0449">Lipoprotein</keyword>
<keyword id="KW-0472">Membrane</keyword>
<keyword id="KW-0597">Phosphoprotein</keyword>
<keyword id="KW-0646">Protease inhibitor</keyword>
<keyword id="KW-0654">Proteoglycan</keyword>
<keyword id="KW-1267">Proteomics identification</keyword>
<keyword id="KW-0873">Pyrrolidone carboxylic acid</keyword>
<keyword id="KW-1185">Reference proteome</keyword>
<keyword id="KW-0732">Signal</keyword>
<dbReference type="EMBL" id="U50410">
    <property type="protein sequence ID" value="AAA93471.1"/>
    <property type="molecule type" value="mRNA"/>
</dbReference>
<dbReference type="EMBL" id="L47124">
    <property type="protein sequence ID" value="AAA98131.1"/>
    <property type="molecule type" value="Genomic_DNA"/>
</dbReference>
<dbReference type="EMBL" id="L47125">
    <property type="protein sequence ID" value="AAA98132.1"/>
    <property type="molecule type" value="mRNA"/>
</dbReference>
<dbReference type="EMBL" id="L47176">
    <property type="protein sequence ID" value="AAB58806.1"/>
    <property type="molecule type" value="mRNA"/>
</dbReference>
<dbReference type="EMBL" id="Z37987">
    <property type="protein sequence ID" value="CAA86069.1"/>
    <property type="molecule type" value="mRNA"/>
</dbReference>
<dbReference type="EMBL" id="DQ349136">
    <property type="protein sequence ID" value="ABC72125.1"/>
    <property type="molecule type" value="mRNA"/>
</dbReference>
<dbReference type="EMBL" id="DQ349138">
    <property type="protein sequence ID" value="ABC72127.1"/>
    <property type="molecule type" value="mRNA"/>
</dbReference>
<dbReference type="EMBL" id="AL008712">
    <property type="protein sequence ID" value="CAI43110.1"/>
    <property type="molecule type" value="Genomic_DNA"/>
</dbReference>
<dbReference type="EMBL" id="AC002420">
    <property type="protein sequence ID" value="CAI43110.1"/>
    <property type="status" value="JOINED"/>
    <property type="molecule type" value="Genomic_DNA"/>
</dbReference>
<dbReference type="EMBL" id="AF003529">
    <property type="protein sequence ID" value="CAI43110.1"/>
    <property type="status" value="JOINED"/>
    <property type="molecule type" value="Genomic_DNA"/>
</dbReference>
<dbReference type="EMBL" id="AL009174">
    <property type="protein sequence ID" value="CAI43110.1"/>
    <property type="status" value="JOINED"/>
    <property type="molecule type" value="Genomic_DNA"/>
</dbReference>
<dbReference type="EMBL" id="Z99570">
    <property type="protein sequence ID" value="CAI43110.1"/>
    <property type="status" value="JOINED"/>
    <property type="molecule type" value="Genomic_DNA"/>
</dbReference>
<dbReference type="EMBL" id="AL009174">
    <property type="protein sequence ID" value="CAI42761.1"/>
    <property type="molecule type" value="Genomic_DNA"/>
</dbReference>
<dbReference type="EMBL" id="AC002420">
    <property type="protein sequence ID" value="CAI42761.1"/>
    <property type="status" value="JOINED"/>
    <property type="molecule type" value="Genomic_DNA"/>
</dbReference>
<dbReference type="EMBL" id="AF003529">
    <property type="protein sequence ID" value="CAI42761.1"/>
    <property type="status" value="JOINED"/>
    <property type="molecule type" value="Genomic_DNA"/>
</dbReference>
<dbReference type="EMBL" id="AL008712">
    <property type="protein sequence ID" value="CAI42761.1"/>
    <property type="status" value="JOINED"/>
    <property type="molecule type" value="Genomic_DNA"/>
</dbReference>
<dbReference type="EMBL" id="Z99570">
    <property type="protein sequence ID" value="CAI42761.1"/>
    <property type="status" value="JOINED"/>
    <property type="molecule type" value="Genomic_DNA"/>
</dbReference>
<dbReference type="EMBL" id="Z99570">
    <property type="protein sequence ID" value="CAI42277.1"/>
    <property type="molecule type" value="Genomic_DNA"/>
</dbReference>
<dbReference type="EMBL" id="AC002420">
    <property type="protein sequence ID" value="CAI42277.1"/>
    <property type="status" value="JOINED"/>
    <property type="molecule type" value="Genomic_DNA"/>
</dbReference>
<dbReference type="EMBL" id="AF003529">
    <property type="protein sequence ID" value="CAI42277.1"/>
    <property type="status" value="JOINED"/>
    <property type="molecule type" value="Genomic_DNA"/>
</dbReference>
<dbReference type="EMBL" id="AL008712">
    <property type="protein sequence ID" value="CAI42277.1"/>
    <property type="status" value="JOINED"/>
    <property type="molecule type" value="Genomic_DNA"/>
</dbReference>
<dbReference type="EMBL" id="AL009174">
    <property type="protein sequence ID" value="CAI42277.1"/>
    <property type="status" value="JOINED"/>
    <property type="molecule type" value="Genomic_DNA"/>
</dbReference>
<dbReference type="EMBL" id="AL034401">
    <property type="status" value="NOT_ANNOTATED_CDS"/>
    <property type="molecule type" value="Genomic_DNA"/>
</dbReference>
<dbReference type="EMBL" id="AL662851">
    <property type="status" value="NOT_ANNOTATED_CDS"/>
    <property type="molecule type" value="Genomic_DNA"/>
</dbReference>
<dbReference type="EMBL" id="Z97196">
    <property type="status" value="NOT_ANNOTATED_CDS"/>
    <property type="molecule type" value="Genomic_DNA"/>
</dbReference>
<dbReference type="EMBL" id="CH471107">
    <property type="protein sequence ID" value="EAX11771.1"/>
    <property type="molecule type" value="Genomic_DNA"/>
</dbReference>
<dbReference type="EMBL" id="AF003529">
    <property type="protein sequence ID" value="AAB87062.1"/>
    <property type="molecule type" value="Genomic_DNA"/>
</dbReference>
<dbReference type="CCDS" id="CCDS14638.1">
    <molecule id="P51654-1"/>
</dbReference>
<dbReference type="CCDS" id="CCDS55495.1">
    <molecule id="P51654-2"/>
</dbReference>
<dbReference type="CCDS" id="CCDS55496.1">
    <molecule id="P51654-3"/>
</dbReference>
<dbReference type="RefSeq" id="NP_001158089.1">
    <molecule id="P51654-3"/>
    <property type="nucleotide sequence ID" value="NM_001164617.2"/>
</dbReference>
<dbReference type="RefSeq" id="NP_001158091.1">
    <molecule id="P51654-2"/>
    <property type="nucleotide sequence ID" value="NM_001164619.2"/>
</dbReference>
<dbReference type="RefSeq" id="NP_004475.1">
    <molecule id="P51654-1"/>
    <property type="nucleotide sequence ID" value="NM_004484.4"/>
</dbReference>
<dbReference type="PDB" id="7ZA1">
    <property type="method" value="X-ray"/>
    <property type="resolution" value="4.10 A"/>
    <property type="chains" value="A/B/C/D=32-483"/>
</dbReference>
<dbReference type="PDB" id="7ZAW">
    <property type="method" value="X-ray"/>
    <property type="resolution" value="2.58 A"/>
    <property type="chains" value="A=32-483"/>
</dbReference>
<dbReference type="PDBsum" id="7ZA1"/>
<dbReference type="PDBsum" id="7ZAW"/>
<dbReference type="SMR" id="P51654"/>
<dbReference type="BioGRID" id="108983">
    <property type="interactions" value="70"/>
</dbReference>
<dbReference type="CORUM" id="P51654"/>
<dbReference type="DIP" id="DIP-61509N"/>
<dbReference type="FunCoup" id="P51654">
    <property type="interactions" value="468"/>
</dbReference>
<dbReference type="IntAct" id="P51654">
    <property type="interactions" value="65"/>
</dbReference>
<dbReference type="STRING" id="9606.ENSP00000377836"/>
<dbReference type="ChEMBL" id="CHEMBL4630889"/>
<dbReference type="GlyCosmos" id="P51654">
    <property type="glycosylation" value="5 sites, No reported glycans"/>
</dbReference>
<dbReference type="GlyGen" id="P51654">
    <property type="glycosylation" value="7 sites, 9 N-linked glycans (2 sites), 2 O-linked glycans (2 sites)"/>
</dbReference>
<dbReference type="iPTMnet" id="P51654"/>
<dbReference type="PhosphoSitePlus" id="P51654"/>
<dbReference type="SwissPalm" id="P51654"/>
<dbReference type="BioMuta" id="GPC3"/>
<dbReference type="DMDM" id="1708022"/>
<dbReference type="jPOST" id="P51654"/>
<dbReference type="MassIVE" id="P51654"/>
<dbReference type="PaxDb" id="9606-ENSP00000377836"/>
<dbReference type="PeptideAtlas" id="P51654"/>
<dbReference type="ProteomicsDB" id="10697"/>
<dbReference type="ProteomicsDB" id="32411"/>
<dbReference type="ProteomicsDB" id="56359">
    <molecule id="P51654-1"/>
</dbReference>
<dbReference type="Pumba" id="P51654"/>
<dbReference type="TopDownProteomics" id="P51654-1">
    <molecule id="P51654-1"/>
</dbReference>
<dbReference type="ABCD" id="P51654">
    <property type="antibodies" value="67 sequenced antibodies"/>
</dbReference>
<dbReference type="Antibodypedia" id="424">
    <property type="antibodies" value="1584 antibodies from 43 providers"/>
</dbReference>
<dbReference type="DNASU" id="2719"/>
<dbReference type="Ensembl" id="ENST00000370818.8">
    <molecule id="P51654-1"/>
    <property type="protein sequence ID" value="ENSP00000359854.3"/>
    <property type="gene ID" value="ENSG00000147257.16"/>
</dbReference>
<dbReference type="Ensembl" id="ENST00000394299.7">
    <molecule id="P51654-3"/>
    <property type="protein sequence ID" value="ENSP00000377836.2"/>
    <property type="gene ID" value="ENSG00000147257.16"/>
</dbReference>
<dbReference type="Ensembl" id="ENST00000631057.2">
    <molecule id="P51654-2"/>
    <property type="protein sequence ID" value="ENSP00000486325.1"/>
    <property type="gene ID" value="ENSG00000147257.16"/>
</dbReference>
<dbReference type="GeneID" id="2719"/>
<dbReference type="KEGG" id="hsa:2719"/>
<dbReference type="MANE-Select" id="ENST00000370818.8">
    <property type="protein sequence ID" value="ENSP00000359854.3"/>
    <property type="RefSeq nucleotide sequence ID" value="NM_004484.4"/>
    <property type="RefSeq protein sequence ID" value="NP_004475.1"/>
</dbReference>
<dbReference type="UCSC" id="uc004exe.4">
    <molecule id="P51654-1"/>
    <property type="organism name" value="human"/>
</dbReference>
<dbReference type="AGR" id="HGNC:4451"/>
<dbReference type="CTD" id="2719"/>
<dbReference type="DisGeNET" id="2719"/>
<dbReference type="GeneCards" id="GPC3"/>
<dbReference type="GeneReviews" id="GPC3"/>
<dbReference type="HGNC" id="HGNC:4451">
    <property type="gene designation" value="GPC3"/>
</dbReference>
<dbReference type="HPA" id="ENSG00000147257">
    <property type="expression patterns" value="Tissue enriched (placenta)"/>
</dbReference>
<dbReference type="MalaCards" id="GPC3"/>
<dbReference type="MIM" id="300037">
    <property type="type" value="gene"/>
</dbReference>
<dbReference type="MIM" id="312870">
    <property type="type" value="phenotype"/>
</dbReference>
<dbReference type="neXtProt" id="NX_P51654"/>
<dbReference type="OpenTargets" id="ENSG00000147257"/>
<dbReference type="Orphanet" id="654">
    <property type="disease" value="Nephroblastoma"/>
</dbReference>
<dbReference type="Orphanet" id="373">
    <property type="disease" value="Simpson-Golabi-Behmel syndrome"/>
</dbReference>
<dbReference type="PharmGKB" id="PA28832"/>
<dbReference type="VEuPathDB" id="HostDB:ENSG00000147257"/>
<dbReference type="eggNOG" id="KOG3821">
    <property type="taxonomic scope" value="Eukaryota"/>
</dbReference>
<dbReference type="GeneTree" id="ENSGT01050000244955"/>
<dbReference type="HOGENOM" id="CLU_024658_4_2_1"/>
<dbReference type="InParanoid" id="P51654"/>
<dbReference type="OMA" id="TNSMFRS"/>
<dbReference type="OrthoDB" id="6380619at2759"/>
<dbReference type="PAN-GO" id="P51654">
    <property type="GO annotations" value="5 GO annotations based on evolutionary models"/>
</dbReference>
<dbReference type="PhylomeDB" id="P51654"/>
<dbReference type="TreeFam" id="TF105317"/>
<dbReference type="PathwayCommons" id="P51654"/>
<dbReference type="Reactome" id="R-HSA-1971475">
    <property type="pathway name" value="A tetrasaccharide linker sequence is required for GAG synthesis"/>
</dbReference>
<dbReference type="Reactome" id="R-HSA-2022928">
    <property type="pathway name" value="HS-GAG biosynthesis"/>
</dbReference>
<dbReference type="Reactome" id="R-HSA-2024096">
    <property type="pathway name" value="HS-GAG degradation"/>
</dbReference>
<dbReference type="Reactome" id="R-HSA-3560783">
    <property type="pathway name" value="Defective B4GALT7 causes EDS, progeroid type"/>
</dbReference>
<dbReference type="Reactome" id="R-HSA-3560801">
    <property type="pathway name" value="Defective B3GAT3 causes JDSSDHD"/>
</dbReference>
<dbReference type="Reactome" id="R-HSA-3656237">
    <property type="pathway name" value="Defective EXT2 causes exostoses 2"/>
</dbReference>
<dbReference type="Reactome" id="R-HSA-3656253">
    <property type="pathway name" value="Defective EXT1 causes exostoses 1, TRPS2 and CHDS"/>
</dbReference>
<dbReference type="Reactome" id="R-HSA-381426">
    <property type="pathway name" value="Regulation of Insulin-like Growth Factor (IGF) transport and uptake by Insulin-like Growth Factor Binding Proteins (IGFBPs)"/>
</dbReference>
<dbReference type="Reactome" id="R-HSA-4420332">
    <property type="pathway name" value="Defective B3GALT6 causes EDSP2 and SEMDJL1"/>
</dbReference>
<dbReference type="Reactome" id="R-HSA-8957275">
    <property type="pathway name" value="Post-translational protein phosphorylation"/>
</dbReference>
<dbReference type="Reactome" id="R-HSA-9694614">
    <property type="pathway name" value="Attachment and Entry"/>
</dbReference>
<dbReference type="Reactome" id="R-HSA-975634">
    <property type="pathway name" value="Retinoid metabolism and transport"/>
</dbReference>
<dbReference type="Reactome" id="R-HSA-9820960">
    <property type="pathway name" value="Respiratory syncytial virus (RSV) attachment and entry"/>
</dbReference>
<dbReference type="Reactome" id="R-HSA-9833110">
    <property type="pathway name" value="RSV-host interactions"/>
</dbReference>
<dbReference type="SignaLink" id="P51654"/>
<dbReference type="SIGNOR" id="P51654"/>
<dbReference type="BioGRID-ORCS" id="2719">
    <property type="hits" value="11 hits in 769 CRISPR screens"/>
</dbReference>
<dbReference type="ChiTaRS" id="GPC3">
    <property type="organism name" value="human"/>
</dbReference>
<dbReference type="GeneWiki" id="Glypican_3"/>
<dbReference type="GenomeRNAi" id="2719"/>
<dbReference type="Pharos" id="P51654">
    <property type="development level" value="Tbio"/>
</dbReference>
<dbReference type="PRO" id="PR:P51654"/>
<dbReference type="Proteomes" id="UP000005640">
    <property type="component" value="Chromosome X"/>
</dbReference>
<dbReference type="RNAct" id="P51654">
    <property type="molecule type" value="protein"/>
</dbReference>
<dbReference type="Bgee" id="ENSG00000147257">
    <property type="expression patterns" value="Expressed in upper lobe of left lung and 141 other cell types or tissues"/>
</dbReference>
<dbReference type="ExpressionAtlas" id="P51654">
    <property type="expression patterns" value="baseline and differential"/>
</dbReference>
<dbReference type="GO" id="GO:0009986">
    <property type="term" value="C:cell surface"/>
    <property type="evidence" value="ECO:0000318"/>
    <property type="project" value="GO_Central"/>
</dbReference>
<dbReference type="GO" id="GO:0005788">
    <property type="term" value="C:endoplasmic reticulum lumen"/>
    <property type="evidence" value="ECO:0000304"/>
    <property type="project" value="Reactome"/>
</dbReference>
<dbReference type="GO" id="GO:0005796">
    <property type="term" value="C:Golgi lumen"/>
    <property type="evidence" value="ECO:0000304"/>
    <property type="project" value="Reactome"/>
</dbReference>
<dbReference type="GO" id="GO:0043202">
    <property type="term" value="C:lysosomal lumen"/>
    <property type="evidence" value="ECO:0000304"/>
    <property type="project" value="Reactome"/>
</dbReference>
<dbReference type="GO" id="GO:0005886">
    <property type="term" value="C:plasma membrane"/>
    <property type="evidence" value="ECO:0000314"/>
    <property type="project" value="HPA"/>
</dbReference>
<dbReference type="GO" id="GO:0098552">
    <property type="term" value="C:side of membrane"/>
    <property type="evidence" value="ECO:0007669"/>
    <property type="project" value="UniProtKB-KW"/>
</dbReference>
<dbReference type="GO" id="GO:0060422">
    <property type="term" value="F:peptidyl-dipeptidase inhibitor activity"/>
    <property type="evidence" value="ECO:0000314"/>
    <property type="project" value="UniProtKB"/>
</dbReference>
<dbReference type="GO" id="GO:0009653">
    <property type="term" value="P:anatomical structure morphogenesis"/>
    <property type="evidence" value="ECO:0000304"/>
    <property type="project" value="ProtInc"/>
</dbReference>
<dbReference type="GO" id="GO:0009948">
    <property type="term" value="P:anterior/posterior axis specification"/>
    <property type="evidence" value="ECO:0007669"/>
    <property type="project" value="Ensembl"/>
</dbReference>
<dbReference type="GO" id="GO:0010171">
    <property type="term" value="P:body morphogenesis"/>
    <property type="evidence" value="ECO:0007669"/>
    <property type="project" value="Ensembl"/>
</dbReference>
<dbReference type="GO" id="GO:0030282">
    <property type="term" value="P:bone mineralization"/>
    <property type="evidence" value="ECO:0007669"/>
    <property type="project" value="Ensembl"/>
</dbReference>
<dbReference type="GO" id="GO:0001658">
    <property type="term" value="P:branching involved in ureteric bud morphogenesis"/>
    <property type="evidence" value="ECO:0007669"/>
    <property type="project" value="Ensembl"/>
</dbReference>
<dbReference type="GO" id="GO:0060070">
    <property type="term" value="P:canonical Wnt signaling pathway"/>
    <property type="evidence" value="ECO:0007669"/>
    <property type="project" value="Ensembl"/>
</dbReference>
<dbReference type="GO" id="GO:0016477">
    <property type="term" value="P:cell migration"/>
    <property type="evidence" value="ECO:0000318"/>
    <property type="project" value="GO_Central"/>
</dbReference>
<dbReference type="GO" id="GO:0042074">
    <property type="term" value="P:cell migration involved in gastrulation"/>
    <property type="evidence" value="ECO:0000250"/>
    <property type="project" value="UniProtKB"/>
</dbReference>
<dbReference type="GO" id="GO:0072111">
    <property type="term" value="P:cell proliferation involved in kidney development"/>
    <property type="evidence" value="ECO:0000250"/>
    <property type="project" value="UniProtKB"/>
</dbReference>
<dbReference type="GO" id="GO:0072203">
    <property type="term" value="P:cell proliferation involved in metanephros development"/>
    <property type="evidence" value="ECO:0007669"/>
    <property type="project" value="Ensembl"/>
</dbReference>
<dbReference type="GO" id="GO:0060976">
    <property type="term" value="P:coronary vasculature development"/>
    <property type="evidence" value="ECO:0000250"/>
    <property type="project" value="UniProtKB"/>
</dbReference>
<dbReference type="GO" id="GO:0035116">
    <property type="term" value="P:embryonic hindlimb morphogenesis"/>
    <property type="evidence" value="ECO:0007669"/>
    <property type="project" value="Ensembl"/>
</dbReference>
<dbReference type="GO" id="GO:0050673">
    <property type="term" value="P:epithelial cell proliferation"/>
    <property type="evidence" value="ECO:0007669"/>
    <property type="project" value="Ensembl"/>
</dbReference>
<dbReference type="GO" id="GO:0030324">
    <property type="term" value="P:lung development"/>
    <property type="evidence" value="ECO:0007669"/>
    <property type="project" value="Ensembl"/>
</dbReference>
<dbReference type="GO" id="GO:0072138">
    <property type="term" value="P:mesenchymal cell proliferation involved in ureteric bud development"/>
    <property type="evidence" value="ECO:0000250"/>
    <property type="project" value="UniProtKB"/>
</dbReference>
<dbReference type="GO" id="GO:0072180">
    <property type="term" value="P:mesonephric duct morphogenesis"/>
    <property type="evidence" value="ECO:0000250"/>
    <property type="project" value="UniProtKB"/>
</dbReference>
<dbReference type="GO" id="GO:0090090">
    <property type="term" value="P:negative regulation of canonical Wnt signaling pathway"/>
    <property type="evidence" value="ECO:0007669"/>
    <property type="project" value="Ensembl"/>
</dbReference>
<dbReference type="GO" id="GO:0050680">
    <property type="term" value="P:negative regulation of epithelial cell proliferation"/>
    <property type="evidence" value="ECO:0007669"/>
    <property type="project" value="Ensembl"/>
</dbReference>
<dbReference type="GO" id="GO:0045926">
    <property type="term" value="P:negative regulation of growth"/>
    <property type="evidence" value="ECO:0007669"/>
    <property type="project" value="Ensembl"/>
</dbReference>
<dbReference type="GO" id="GO:0045879">
    <property type="term" value="P:negative regulation of smoothened signaling pathway"/>
    <property type="evidence" value="ECO:0000250"/>
    <property type="project" value="UniProtKB"/>
</dbReference>
<dbReference type="GO" id="GO:0030316">
    <property type="term" value="P:osteoclast differentiation"/>
    <property type="evidence" value="ECO:0007669"/>
    <property type="project" value="Ensembl"/>
</dbReference>
<dbReference type="GO" id="GO:0030513">
    <property type="term" value="P:positive regulation of BMP signaling pathway"/>
    <property type="evidence" value="ECO:0007669"/>
    <property type="project" value="Ensembl"/>
</dbReference>
<dbReference type="GO" id="GO:0090263">
    <property type="term" value="P:positive regulation of canonical Wnt signaling pathway"/>
    <property type="evidence" value="ECO:0000314"/>
    <property type="project" value="UniProtKB"/>
</dbReference>
<dbReference type="GO" id="GO:0046326">
    <property type="term" value="P:positive regulation of D-glucose import"/>
    <property type="evidence" value="ECO:0007669"/>
    <property type="project" value="Ensembl"/>
</dbReference>
<dbReference type="GO" id="GO:0045807">
    <property type="term" value="P:positive regulation of endocytosis"/>
    <property type="evidence" value="ECO:0000250"/>
    <property type="project" value="UniProtKB"/>
</dbReference>
<dbReference type="GO" id="GO:0045732">
    <property type="term" value="P:positive regulation of protein catabolic process"/>
    <property type="evidence" value="ECO:0000250"/>
    <property type="project" value="UniProtKB"/>
</dbReference>
<dbReference type="GO" id="GO:0045880">
    <property type="term" value="P:positive regulation of smoothened signaling pathway"/>
    <property type="evidence" value="ECO:0007669"/>
    <property type="project" value="Ensembl"/>
</dbReference>
<dbReference type="GO" id="GO:2000096">
    <property type="term" value="P:positive regulation of Wnt signaling pathway, planar cell polarity pathway"/>
    <property type="evidence" value="ECO:0007669"/>
    <property type="project" value="Ensembl"/>
</dbReference>
<dbReference type="GO" id="GO:0060828">
    <property type="term" value="P:regulation of canonical Wnt signaling pathway"/>
    <property type="evidence" value="ECO:0000314"/>
    <property type="project" value="UniProtKB"/>
</dbReference>
<dbReference type="GO" id="GO:2000050">
    <property type="term" value="P:regulation of non-canonical Wnt signaling pathway"/>
    <property type="evidence" value="ECO:0000314"/>
    <property type="project" value="UniProtKB"/>
</dbReference>
<dbReference type="GO" id="GO:1905475">
    <property type="term" value="P:regulation of protein localization to membrane"/>
    <property type="evidence" value="ECO:0000318"/>
    <property type="project" value="GO_Central"/>
</dbReference>
<dbReference type="GO" id="GO:0009617">
    <property type="term" value="P:response to bacterium"/>
    <property type="evidence" value="ECO:0007669"/>
    <property type="project" value="Ensembl"/>
</dbReference>
<dbReference type="GO" id="GO:0007224">
    <property type="term" value="P:smoothened signaling pathway"/>
    <property type="evidence" value="ECO:0007669"/>
    <property type="project" value="Ensembl"/>
</dbReference>
<dbReference type="GO" id="GO:0060071">
    <property type="term" value="P:Wnt signaling pathway, planar cell polarity pathway"/>
    <property type="evidence" value="ECO:0007669"/>
    <property type="project" value="Ensembl"/>
</dbReference>
<dbReference type="InterPro" id="IPR001863">
    <property type="entry name" value="Glypican"/>
</dbReference>
<dbReference type="InterPro" id="IPR019803">
    <property type="entry name" value="Glypican_CS"/>
</dbReference>
<dbReference type="PANTHER" id="PTHR10822">
    <property type="entry name" value="GLYPICAN"/>
    <property type="match status" value="1"/>
</dbReference>
<dbReference type="PANTHER" id="PTHR10822:SF4">
    <property type="entry name" value="GLYPICAN-3"/>
    <property type="match status" value="1"/>
</dbReference>
<dbReference type="Pfam" id="PF01153">
    <property type="entry name" value="Glypican"/>
    <property type="match status" value="1"/>
</dbReference>
<dbReference type="PROSITE" id="PS01207">
    <property type="entry name" value="GLYPICAN"/>
    <property type="match status" value="1"/>
</dbReference>
<reference key="1">
    <citation type="journal article" date="1997" name="Mamm. Genome">
        <title>Mapping of the Simpson-Golabi-Behmel overgrowth syndrome gene (GPC3) to chromosome X in human and rat by fluorescence in situ hybridization.</title>
        <authorList>
            <person name="Shen T."/>
            <person name="Sonoda G."/>
            <person name="Hamid J."/>
            <person name="Li M."/>
            <person name="Filmus J."/>
            <person name="Buick R.N."/>
            <person name="Testa J.R."/>
        </authorList>
    </citation>
    <scope>NUCLEOTIDE SEQUENCE [MRNA] (ISOFORM 1)</scope>
</reference>
<reference key="2">
    <citation type="journal article" date="1996" name="Nat. Genet.">
        <title>Mutations in GPC3, a glypican gene, cause the Simpson-Golabi-Behmel overgrowth syndrome.</title>
        <authorList>
            <person name="Pilia G."/>
            <person name="Hughes-Benzie R.M."/>
            <person name="Mackenzie A."/>
            <person name="Baybayan P."/>
            <person name="Chen E.Y."/>
            <person name="Huber R."/>
            <person name="Neri G."/>
            <person name="Cao A."/>
            <person name="Forabosco A."/>
            <person name="Schlessinger D."/>
        </authorList>
    </citation>
    <scope>NUCLEOTIDE SEQUENCE [GENOMIC DNA / MRNA] (ISOFORM 1)</scope>
    <scope>TISSUE SPECIFICITY</scope>
    <scope>DISEASE</scope>
    <source>
        <tissue>Embryo</tissue>
    </source>
</reference>
<reference key="3">
    <citation type="journal article" date="1997" name="Gene">
        <title>Cloning and characterization of human cDNAs encoding a protein with high homology to rat intestinal development protein OCI-5.</title>
        <authorList>
            <person name="Lage H."/>
            <person name="Dietel M."/>
        </authorList>
    </citation>
    <scope>NUCLEOTIDE SEQUENCE [MRNA] (ISOFORM 1)</scope>
</reference>
<reference key="4">
    <citation type="submission" date="2006-01" db="EMBL/GenBank/DDBJ databases">
        <title>Expression of the Glypican-3 protein in hepatoma cells.</title>
        <authorList>
            <person name="Grozdanov P.N."/>
            <person name="Yovchev M.I."/>
            <person name="Dabeva M.D."/>
        </authorList>
    </citation>
    <scope>NUCLEOTIDE SEQUENCE [MRNA] (ISOFORMS 2 AND 3)</scope>
    <scope>VARIANT MET-429</scope>
</reference>
<reference key="5">
    <citation type="journal article" date="2005" name="Nature">
        <title>The DNA sequence of the human X chromosome.</title>
        <authorList>
            <person name="Ross M.T."/>
            <person name="Grafham D.V."/>
            <person name="Coffey A.J."/>
            <person name="Scherer S."/>
            <person name="McLay K."/>
            <person name="Muzny D."/>
            <person name="Platzer M."/>
            <person name="Howell G.R."/>
            <person name="Burrows C."/>
            <person name="Bird C.P."/>
            <person name="Frankish A."/>
            <person name="Lovell F.L."/>
            <person name="Howe K.L."/>
            <person name="Ashurst J.L."/>
            <person name="Fulton R.S."/>
            <person name="Sudbrak R."/>
            <person name="Wen G."/>
            <person name="Jones M.C."/>
            <person name="Hurles M.E."/>
            <person name="Andrews T.D."/>
            <person name="Scott C.E."/>
            <person name="Searle S."/>
            <person name="Ramser J."/>
            <person name="Whittaker A."/>
            <person name="Deadman R."/>
            <person name="Carter N.P."/>
            <person name="Hunt S.E."/>
            <person name="Chen R."/>
            <person name="Cree A."/>
            <person name="Gunaratne P."/>
            <person name="Havlak P."/>
            <person name="Hodgson A."/>
            <person name="Metzker M.L."/>
            <person name="Richards S."/>
            <person name="Scott G."/>
            <person name="Steffen D."/>
            <person name="Sodergren E."/>
            <person name="Wheeler D.A."/>
            <person name="Worley K.C."/>
            <person name="Ainscough R."/>
            <person name="Ambrose K.D."/>
            <person name="Ansari-Lari M.A."/>
            <person name="Aradhya S."/>
            <person name="Ashwell R.I."/>
            <person name="Babbage A.K."/>
            <person name="Bagguley C.L."/>
            <person name="Ballabio A."/>
            <person name="Banerjee R."/>
            <person name="Barker G.E."/>
            <person name="Barlow K.F."/>
            <person name="Barrett I.P."/>
            <person name="Bates K.N."/>
            <person name="Beare D.M."/>
            <person name="Beasley H."/>
            <person name="Beasley O."/>
            <person name="Beck A."/>
            <person name="Bethel G."/>
            <person name="Blechschmidt K."/>
            <person name="Brady N."/>
            <person name="Bray-Allen S."/>
            <person name="Bridgeman A.M."/>
            <person name="Brown A.J."/>
            <person name="Brown M.J."/>
            <person name="Bonnin D."/>
            <person name="Bruford E.A."/>
            <person name="Buhay C."/>
            <person name="Burch P."/>
            <person name="Burford D."/>
            <person name="Burgess J."/>
            <person name="Burrill W."/>
            <person name="Burton J."/>
            <person name="Bye J.M."/>
            <person name="Carder C."/>
            <person name="Carrel L."/>
            <person name="Chako J."/>
            <person name="Chapman J.C."/>
            <person name="Chavez D."/>
            <person name="Chen E."/>
            <person name="Chen G."/>
            <person name="Chen Y."/>
            <person name="Chen Z."/>
            <person name="Chinault C."/>
            <person name="Ciccodicola A."/>
            <person name="Clark S.Y."/>
            <person name="Clarke G."/>
            <person name="Clee C.M."/>
            <person name="Clegg S."/>
            <person name="Clerc-Blankenburg K."/>
            <person name="Clifford K."/>
            <person name="Cobley V."/>
            <person name="Cole C.G."/>
            <person name="Conquer J.S."/>
            <person name="Corby N."/>
            <person name="Connor R.E."/>
            <person name="David R."/>
            <person name="Davies J."/>
            <person name="Davis C."/>
            <person name="Davis J."/>
            <person name="Delgado O."/>
            <person name="Deshazo D."/>
            <person name="Dhami P."/>
            <person name="Ding Y."/>
            <person name="Dinh H."/>
            <person name="Dodsworth S."/>
            <person name="Draper H."/>
            <person name="Dugan-Rocha S."/>
            <person name="Dunham A."/>
            <person name="Dunn M."/>
            <person name="Durbin K.J."/>
            <person name="Dutta I."/>
            <person name="Eades T."/>
            <person name="Ellwood M."/>
            <person name="Emery-Cohen A."/>
            <person name="Errington H."/>
            <person name="Evans K.L."/>
            <person name="Faulkner L."/>
            <person name="Francis F."/>
            <person name="Frankland J."/>
            <person name="Fraser A.E."/>
            <person name="Galgoczy P."/>
            <person name="Gilbert J."/>
            <person name="Gill R."/>
            <person name="Gloeckner G."/>
            <person name="Gregory S.G."/>
            <person name="Gribble S."/>
            <person name="Griffiths C."/>
            <person name="Grocock R."/>
            <person name="Gu Y."/>
            <person name="Gwilliam R."/>
            <person name="Hamilton C."/>
            <person name="Hart E.A."/>
            <person name="Hawes A."/>
            <person name="Heath P.D."/>
            <person name="Heitmann K."/>
            <person name="Hennig S."/>
            <person name="Hernandez J."/>
            <person name="Hinzmann B."/>
            <person name="Ho S."/>
            <person name="Hoffs M."/>
            <person name="Howden P.J."/>
            <person name="Huckle E.J."/>
            <person name="Hume J."/>
            <person name="Hunt P.J."/>
            <person name="Hunt A.R."/>
            <person name="Isherwood J."/>
            <person name="Jacob L."/>
            <person name="Johnson D."/>
            <person name="Jones S."/>
            <person name="de Jong P.J."/>
            <person name="Joseph S.S."/>
            <person name="Keenan S."/>
            <person name="Kelly S."/>
            <person name="Kershaw J.K."/>
            <person name="Khan Z."/>
            <person name="Kioschis P."/>
            <person name="Klages S."/>
            <person name="Knights A.J."/>
            <person name="Kosiura A."/>
            <person name="Kovar-Smith C."/>
            <person name="Laird G.K."/>
            <person name="Langford C."/>
            <person name="Lawlor S."/>
            <person name="Leversha M."/>
            <person name="Lewis L."/>
            <person name="Liu W."/>
            <person name="Lloyd C."/>
            <person name="Lloyd D.M."/>
            <person name="Loulseged H."/>
            <person name="Loveland J.E."/>
            <person name="Lovell J.D."/>
            <person name="Lozado R."/>
            <person name="Lu J."/>
            <person name="Lyne R."/>
            <person name="Ma J."/>
            <person name="Maheshwari M."/>
            <person name="Matthews L.H."/>
            <person name="McDowall J."/>
            <person name="McLaren S."/>
            <person name="McMurray A."/>
            <person name="Meidl P."/>
            <person name="Meitinger T."/>
            <person name="Milne S."/>
            <person name="Miner G."/>
            <person name="Mistry S.L."/>
            <person name="Morgan M."/>
            <person name="Morris S."/>
            <person name="Mueller I."/>
            <person name="Mullikin J.C."/>
            <person name="Nguyen N."/>
            <person name="Nordsiek G."/>
            <person name="Nyakatura G."/>
            <person name="O'dell C.N."/>
            <person name="Okwuonu G."/>
            <person name="Palmer S."/>
            <person name="Pandian R."/>
            <person name="Parker D."/>
            <person name="Parrish J."/>
            <person name="Pasternak S."/>
            <person name="Patel D."/>
            <person name="Pearce A.V."/>
            <person name="Pearson D.M."/>
            <person name="Pelan S.E."/>
            <person name="Perez L."/>
            <person name="Porter K.M."/>
            <person name="Ramsey Y."/>
            <person name="Reichwald K."/>
            <person name="Rhodes S."/>
            <person name="Ridler K.A."/>
            <person name="Schlessinger D."/>
            <person name="Schueler M.G."/>
            <person name="Sehra H.K."/>
            <person name="Shaw-Smith C."/>
            <person name="Shen H."/>
            <person name="Sheridan E.M."/>
            <person name="Shownkeen R."/>
            <person name="Skuce C.D."/>
            <person name="Smith M.L."/>
            <person name="Sotheran E.C."/>
            <person name="Steingruber H.E."/>
            <person name="Steward C.A."/>
            <person name="Storey R."/>
            <person name="Swann R.M."/>
            <person name="Swarbreck D."/>
            <person name="Tabor P.E."/>
            <person name="Taudien S."/>
            <person name="Taylor T."/>
            <person name="Teague B."/>
            <person name="Thomas K."/>
            <person name="Thorpe A."/>
            <person name="Timms K."/>
            <person name="Tracey A."/>
            <person name="Trevanion S."/>
            <person name="Tromans A.C."/>
            <person name="d'Urso M."/>
            <person name="Verduzco D."/>
            <person name="Villasana D."/>
            <person name="Waldron L."/>
            <person name="Wall M."/>
            <person name="Wang Q."/>
            <person name="Warren J."/>
            <person name="Warry G.L."/>
            <person name="Wei X."/>
            <person name="West A."/>
            <person name="Whitehead S.L."/>
            <person name="Whiteley M.N."/>
            <person name="Wilkinson J.E."/>
            <person name="Willey D.L."/>
            <person name="Williams G."/>
            <person name="Williams L."/>
            <person name="Williamson A."/>
            <person name="Williamson H."/>
            <person name="Wilming L."/>
            <person name="Woodmansey R.L."/>
            <person name="Wray P.W."/>
            <person name="Yen J."/>
            <person name="Zhang J."/>
            <person name="Zhou J."/>
            <person name="Zoghbi H."/>
            <person name="Zorilla S."/>
            <person name="Buck D."/>
            <person name="Reinhardt R."/>
            <person name="Poustka A."/>
            <person name="Rosenthal A."/>
            <person name="Lehrach H."/>
            <person name="Meindl A."/>
            <person name="Minx P.J."/>
            <person name="Hillier L.W."/>
            <person name="Willard H.F."/>
            <person name="Wilson R.K."/>
            <person name="Waterston R.H."/>
            <person name="Rice C.M."/>
            <person name="Vaudin M."/>
            <person name="Coulson A."/>
            <person name="Nelson D.L."/>
            <person name="Weinstock G."/>
            <person name="Sulston J.E."/>
            <person name="Durbin R.M."/>
            <person name="Hubbard T."/>
            <person name="Gibbs R.A."/>
            <person name="Beck S."/>
            <person name="Rogers J."/>
            <person name="Bentley D.R."/>
        </authorList>
    </citation>
    <scope>NUCLEOTIDE SEQUENCE [LARGE SCALE GENOMIC DNA]</scope>
</reference>
<reference key="6">
    <citation type="submission" date="2005-09" db="EMBL/GenBank/DDBJ databases">
        <authorList>
            <person name="Mural R.J."/>
            <person name="Istrail S."/>
            <person name="Sutton G."/>
            <person name="Florea L."/>
            <person name="Halpern A.L."/>
            <person name="Mobarry C.M."/>
            <person name="Lippert R."/>
            <person name="Walenz B."/>
            <person name="Shatkay H."/>
            <person name="Dew I."/>
            <person name="Miller J.R."/>
            <person name="Flanigan M.J."/>
            <person name="Edwards N.J."/>
            <person name="Bolanos R."/>
            <person name="Fasulo D."/>
            <person name="Halldorsson B.V."/>
            <person name="Hannenhalli S."/>
            <person name="Turner R."/>
            <person name="Yooseph S."/>
            <person name="Lu F."/>
            <person name="Nusskern D.R."/>
            <person name="Shue B.C."/>
            <person name="Zheng X.H."/>
            <person name="Zhong F."/>
            <person name="Delcher A.L."/>
            <person name="Huson D.H."/>
            <person name="Kravitz S.A."/>
            <person name="Mouchard L."/>
            <person name="Reinert K."/>
            <person name="Remington K.A."/>
            <person name="Clark A.G."/>
            <person name="Waterman M.S."/>
            <person name="Eichler E.E."/>
            <person name="Adams M.D."/>
            <person name="Hunkapiller M.W."/>
            <person name="Myers E.W."/>
            <person name="Venter J.C."/>
        </authorList>
    </citation>
    <scope>NUCLEOTIDE SEQUENCE [LARGE SCALE GENOMIC DNA]</scope>
</reference>
<reference key="7">
    <citation type="journal article" date="1997" name="Genomics">
        <title>Analysis of exon/intron structure and 400 kb of genomic sequence surrounding the 5'-promoter and 3'-terminal ends of the human glypican 3 (GPC3) gene.</title>
        <authorList>
            <person name="Huber R."/>
            <person name="Crisponi L."/>
            <person name="Mazzarella R."/>
            <person name="Chen C.N."/>
            <person name="Su Y."/>
            <person name="Shizuya H."/>
            <person name="Chen E.Y."/>
            <person name="Cao A."/>
            <person name="Pilia G."/>
        </authorList>
    </citation>
    <scope>NUCLEOTIDE SEQUENCE [GENOMIC DNA] OF 1-58</scope>
</reference>
<reference key="8">
    <citation type="journal article" date="2003" name="Gastroenterology">
        <title>Glypican-3: a novel serum and histochemical marker for hepatocellular carcinoma.</title>
        <authorList>
            <person name="Capurro M."/>
            <person name="Wanless I.R."/>
            <person name="Sherman M."/>
            <person name="Deboer G."/>
            <person name="Shi W."/>
            <person name="Miyoshi E."/>
            <person name="Filmus J."/>
        </authorList>
    </citation>
    <scope>MARKER FOR HEPATOCELLULAR CARCINOMA</scope>
</reference>
<reference key="9">
    <citation type="journal article" date="2003" name="J. Cell Biol.">
        <title>Processing by proprotein convertases is required for glypican-3 modulation of cell survival, Wnt signaling, and gastrulation movements.</title>
        <authorList>
            <person name="De Cat B."/>
            <person name="Muyldermans S.Y."/>
            <person name="Coomans C."/>
            <person name="Degeest G."/>
            <person name="Vanderschueren B."/>
            <person name="Creemers J."/>
            <person name="Biemar F."/>
            <person name="Peers B."/>
            <person name="David G."/>
        </authorList>
    </citation>
    <scope>FUNCTION</scope>
    <scope>SUBUNIT</scope>
    <scope>INTERACTION WITH WNT5A</scope>
    <scope>SUBCELLULAR LOCATION</scope>
    <scope>GLYCOSYLATION</scope>
    <scope>CLEAVAGE</scope>
    <scope>MUTAGENESIS OF 355-ARG--ARG-358; 370-LYS--LYS-374; 387-ARG--ARG-389 AND 394-LYS--LYS-396</scope>
</reference>
<reference key="10">
    <citation type="journal article" date="2004" name="Cancer Res.">
        <title>Identification of soluble NH2-terminal fragment of glypican-3 as a serological marker for early-stage hepatocellular carcinoma.</title>
        <authorList>
            <person name="Hippo Y."/>
            <person name="Watanabe K."/>
            <person name="Watanabe A."/>
            <person name="Midorikawa Y."/>
            <person name="Yamamoto S."/>
            <person name="Ihara S."/>
            <person name="Tokita S."/>
            <person name="Iwanari H."/>
            <person name="Ito Y."/>
            <person name="Nakano K."/>
            <person name="Nezu J."/>
            <person name="Tsunoda H."/>
            <person name="Yoshino T."/>
            <person name="Ohizumi I."/>
            <person name="Tsuchiya M."/>
            <person name="Ohnishi S."/>
            <person name="Makuuchi M."/>
            <person name="Hamakubo T."/>
            <person name="Kodama T."/>
            <person name="Aburatani H."/>
        </authorList>
    </citation>
    <scope>PROTEIN SEQUENCE OF 359-367</scope>
</reference>
<reference key="11">
    <citation type="journal article" date="2005" name="Cancer Res.">
        <title>Glypican-3 promotes the growth of hepatocellular carcinoma by stimulating canonical Wnt signaling.</title>
        <authorList>
            <person name="Capurro M.I."/>
            <person name="Xiang Y.Y."/>
            <person name="Lobe C."/>
            <person name="Filmus J."/>
        </authorList>
    </citation>
    <scope>ROLE IN HEPATOCELLULAR CARCINOMA GROWTH</scope>
</reference>
<reference key="12">
    <citation type="journal article" date="2005" name="J. Biol. Chem.">
        <title>Processing by convertases is not required for glypican-3-induced stimulation of hepatocellular carcinoma growth.</title>
        <authorList>
            <person name="Capurro M.I."/>
            <person name="Shi W."/>
            <person name="Sandal S."/>
            <person name="Filmus J."/>
        </authorList>
    </citation>
    <scope>FUNCTION</scope>
    <scope>INTERACTION WITH WNT3A AND WNT7B</scope>
    <scope>MUTAGENESIS OF 355-ARG--ARG-358</scope>
    <scope>ROLE IN HEPATOCELLULAR CARCINOMA GROWTH</scope>
</reference>
<reference key="13">
    <citation type="journal article" date="2007" name="Proteomics">
        <title>The Simpson-Golabi-Behmel syndrome causative glypican-3, binds to and inhibits the dipeptidyl peptidase activity of CD26.</title>
        <authorList>
            <person name="Davoodi J."/>
            <person name="Kelly J."/>
            <person name="Gendron N.H."/>
            <person name="MacKenzie A.E."/>
        </authorList>
    </citation>
    <scope>FUNCTION</scope>
    <scope>INTERACTION WITH DPP4</scope>
</reference>
<reference key="14">
    <citation type="journal article" date="2011" name="BMC Syst. Biol.">
        <title>Initial characterization of the human central proteome.</title>
        <authorList>
            <person name="Burkard T.R."/>
            <person name="Planyavsky M."/>
            <person name="Kaupe I."/>
            <person name="Breitwieser F.P."/>
            <person name="Buerckstuemmer T."/>
            <person name="Bennett K.L."/>
            <person name="Superti-Furga G."/>
            <person name="Colinge J."/>
        </authorList>
    </citation>
    <scope>IDENTIFICATION BY MASS SPECTROMETRY [LARGE SCALE ANALYSIS]</scope>
</reference>
<reference key="15">
    <citation type="journal article" date="2014" name="J. Cell Sci.">
        <title>Glypican-3 binds to Frizzled and plays a direct role in the stimulation of canonical Wnt signaling.</title>
        <authorList>
            <person name="Capurro M."/>
            <person name="Martin T."/>
            <person name="Shi W."/>
            <person name="Filmus J."/>
        </authorList>
    </citation>
    <scope>FUNCTION</scope>
    <scope>INTERACTION WITH FZD4; FZD7 AND FZD8</scope>
</reference>
<reference key="16">
    <citation type="journal article" date="2015" name="Cell">
        <title>A single kinase generates the majority of the secreted phosphoproteome.</title>
        <authorList>
            <person name="Tagliabracci V.S."/>
            <person name="Wiley S.E."/>
            <person name="Guo X."/>
            <person name="Kinch L.N."/>
            <person name="Durrant E."/>
            <person name="Wen J."/>
            <person name="Xiao J."/>
            <person name="Cui J."/>
            <person name="Nguyen K.B."/>
            <person name="Engel J.L."/>
            <person name="Coon J.J."/>
            <person name="Grishin N."/>
            <person name="Pinna L.A."/>
            <person name="Pagliarini D.J."/>
            <person name="Dixon J.E."/>
        </authorList>
    </citation>
    <scope>PHOSPHORYLATION AT SER-352</scope>
</reference>
<reference key="17">
    <citation type="journal article" date="2015" name="J. Biol. Chem.">
        <title>Processing by convertases is required for glypican-3-induced inhibition of Hedgehog signaling.</title>
        <authorList>
            <person name="Capurro M."/>
            <person name="Shi W."/>
            <person name="Izumikawa T."/>
            <person name="Kitagawa H."/>
            <person name="Filmus J."/>
        </authorList>
    </citation>
    <scope>CLEAVAGE</scope>
    <scope>MUTAGENESIS OF 355-ARG--ARG-358</scope>
</reference>
<reference key="18">
    <citation type="journal article" date="2018" name="Biochemistry">
        <title>Role of glycanation and convertase maturation of soluble glypican-3 in inhibiting proliferation of hepatocellular carcinoma cells.</title>
        <authorList>
            <person name="Saad A."/>
            <person name="Liet B."/>
            <person name="Joucla G."/>
            <person name="Santarelli X."/>
            <person name="Charpentier J."/>
            <person name="Claverol S."/>
            <person name="Grosset C.F."/>
            <person name="Trezeguet V."/>
        </authorList>
    </citation>
    <scope>GLYCOSYLATION AT ASN-124; ASN-241 AND ASN-418</scope>
    <scope>PYROGLUTAMATE FORMATION AT GLN-25</scope>
    <scope>IDENTIFICATION BY MASS SPECTROMETRY</scope>
</reference>
<reference key="19">
    <citation type="journal article" date="2020" name="Glycobiology">
        <title>An affinity chromatography and glycoproteomics workflow to profile the chondroitin sulfate proteoglycans that interact with malarial VAR2CSA in the placenta and in cancer.</title>
        <authorList>
            <person name="Toledo A.G."/>
            <person name="Pihl J."/>
            <person name="Spliid C.B."/>
            <person name="Persson A."/>
            <person name="Nilsson J."/>
            <person name="Pereira M.A."/>
            <person name="Gustavsson T."/>
            <person name="Choudhary S."/>
            <person name="Oo H.Z."/>
            <person name="Black P.C."/>
            <person name="Daugaard M."/>
            <person name="Esko J.D."/>
            <person name="Larson G."/>
            <person name="Salanti A."/>
            <person name="Clausen T.M."/>
        </authorList>
    </citation>
    <scope>TISSUE SPECIFICITY</scope>
    <scope>GLYCOSYLATION</scope>
</reference>
<reference key="20">
    <citation type="journal article" date="2000" name="Hum. Mol. Genet.">
        <title>Mutational analysis of the GPC3/GPC4 glypican gene cluster on Xq26 in patients with Simpson-Golabi-Behmel syndrome: identification of loss-of-function mutations in the GPC3 gene.</title>
        <authorList>
            <person name="Veugelers M."/>
            <person name="Cat B.D."/>
            <person name="Muyldermans S.Y."/>
            <person name="Reekmans G."/>
            <person name="Delande N."/>
            <person name="Frints S."/>
            <person name="Legius E."/>
            <person name="Fryns J.-P."/>
            <person name="Schrander-Stumpel C."/>
            <person name="Weidle B."/>
            <person name="Magdalena N."/>
            <person name="David G."/>
        </authorList>
    </citation>
    <scope>VARIANT SGBS1 ARG-296</scope>
</reference>
<sequence>MAGTVRTACLVVAMLLSLDFPGQAQPPPPPPDATCHQVRSFFQRLQPGLKWVPETPVPGSDLQVCLPKGPTCCSRKMEEKYQLTARLNMEQLLQSASMELKFLIIQNAAVFQEAFEIVVRHAKNYTNAMFKNNYPSLTPQAFEFVGEFFTDVSLYILGSDINVDDMVNELFDSLFPVIYTQLMNPGLPDSALDINECLRGARRDLKVFGNFPKLIMTQVSKSLQVTRIFLQALNLGIEVINTTDHLKFSKDCGRMLTRMWYCSYCQGLMMVKPCGGYCNVVMQGCMAGVVEIDKYWREYILSLEELVNGMYRIYDMENVLLGLFSTIHDSIQYVQKNAGKLTTTIGKLCAHSQQRQYRSAYYPEDLFIDKKVLKVAHVEHEETLSSRRRELIQKLKSFISFYSALPGYICSHSPVAENDTLCWNGQELVERYSQKAARNGMKNQFNLHELKMKGPEPVVSQIIDKLKHINQLLRTMSMPKGRVLDKNLDEEGFESGDCGDDEDECIGGSGDGMIKVKNQLRFLAELAYDLDVDDAPGNSQQATPKDNEISTFHNLGNVHSPLKLLTSMAISVVCFFFLVH</sequence>
<name>GPC3_HUMAN</name>
<protein>
    <recommendedName>
        <fullName>Glypican-3</fullName>
    </recommendedName>
    <alternativeName>
        <fullName>GTR2-2</fullName>
    </alternativeName>
    <alternativeName>
        <fullName>Intestinal protein OCI-5</fullName>
    </alternativeName>
    <alternativeName>
        <fullName>MXR7</fullName>
    </alternativeName>
    <component>
        <recommendedName>
            <fullName evidence="20">Glypican-3 alpha subunit</fullName>
        </recommendedName>
    </component>
    <component>
        <recommendedName>
            <fullName evidence="20">Glypican-3 beta subunit</fullName>
        </recommendedName>
    </component>
</protein>
<accession>P51654</accession>
<accession>C9JLE3</accession>
<accession>G3V1R0</accession>
<accession>Q2L880</accession>
<accession>Q2L882</accession>
<feature type="signal peptide" evidence="16">
    <location>
        <begin position="1"/>
        <end position="24"/>
    </location>
</feature>
<feature type="chain" id="PRO_0000445410" description="Glypican-3 alpha subunit" evidence="23">
    <location>
        <begin position="25"/>
        <end position="358"/>
    </location>
</feature>
<feature type="chain" id="PRO_0000445411" description="Glypican-3 beta subunit" evidence="23">
    <location>
        <begin position="359"/>
        <end position="554"/>
    </location>
</feature>
<feature type="propeptide" id="PRO_0000012310" description="Removed in mature form" evidence="5">
    <location>
        <begin position="555"/>
        <end position="580"/>
    </location>
</feature>
<feature type="site" description="Cleavage" evidence="8 9">
    <location>
        <begin position="358"/>
        <end position="359"/>
    </location>
</feature>
<feature type="modified residue" description="Pyrrolidone carboxylic acid" evidence="16">
    <location>
        <position position="25"/>
    </location>
</feature>
<feature type="modified residue" description="Phosphoserine; by FAM20C" evidence="15">
    <location>
        <position position="352"/>
    </location>
</feature>
<feature type="lipid moiety-binding region" description="GPI-anchor amidated asparagine" evidence="5">
    <location>
        <position position="554"/>
    </location>
</feature>
<feature type="glycosylation site" description="N-linked (GlcNAc...) asparagine" evidence="16">
    <location>
        <position position="124"/>
    </location>
</feature>
<feature type="glycosylation site" description="N-linked (GlcNAc...) asparagine" evidence="16">
    <location>
        <position position="241"/>
    </location>
</feature>
<feature type="glycosylation site" description="N-linked (GlcNAc...) asparagine" evidence="16">
    <location>
        <position position="418"/>
    </location>
</feature>
<feature type="glycosylation site" description="O-linked (Xyl...) (glycosaminoglycan) serine" evidence="5">
    <location>
        <position position="495"/>
    </location>
</feature>
<feature type="glycosylation site" description="O-linked (Xyl...) (glycosaminoglycan) serine" evidence="5">
    <location>
        <position position="509"/>
    </location>
</feature>
<feature type="disulfide bond" evidence="2">
    <location>
        <begin position="35"/>
        <end position="72"/>
    </location>
</feature>
<feature type="disulfide bond" evidence="2">
    <location>
        <begin position="65"/>
        <end position="262"/>
    </location>
</feature>
<feature type="disulfide bond" evidence="2">
    <location>
        <begin position="73"/>
        <end position="265"/>
    </location>
</feature>
<feature type="disulfide bond" evidence="2">
    <location>
        <begin position="197"/>
        <end position="349"/>
    </location>
</feature>
<feature type="disulfide bond" evidence="2">
    <location>
        <begin position="252"/>
        <end position="285"/>
    </location>
</feature>
<feature type="disulfide bond" description="Interchain (between alpha and beta chains)" evidence="2">
    <location>
        <begin position="274"/>
        <end position="422"/>
    </location>
</feature>
<feature type="disulfide bond" description="Interchain (between alpha and beta chains)" evidence="2">
    <location>
        <begin position="278"/>
        <end position="410"/>
    </location>
</feature>
<feature type="splice variant" id="VSP_046117" description="In isoform 2." evidence="21">
    <location>
        <begin position="59"/>
        <end position="112"/>
    </location>
</feature>
<feature type="splice variant" id="VSP_046703" description="In isoform 3." evidence="21">
    <original>T</original>
    <variation>TETEKKIWHFKYPIFFLCIGLDLQ</variation>
    <location>
        <position position="344"/>
    </location>
</feature>
<feature type="sequence variant" id="VAR_021385" description="In SGBS1; dbSNP:rs104894854." evidence="6">
    <original>W</original>
    <variation>R</variation>
    <location>
        <position position="296"/>
    </location>
</feature>
<feature type="sequence variant" id="VAR_069139" description="In dbSNP:rs11539789." evidence="19">
    <original>V</original>
    <variation>M</variation>
    <location>
        <position position="429"/>
    </location>
</feature>
<feature type="mutagenesis site" description="Abolishes proteolytic processing. Abolishes interaction with WNT5A and ability to regulate Wnt signaling. Increases binding of hedgehog protein SHH to the PTC1 receptor and abolishes ability to inhibit hedgehog signaling." evidence="8 11 14">
    <original>RQYR</original>
    <variation>AQYA</variation>
    <location>
        <begin position="355"/>
        <end position="358"/>
    </location>
</feature>
<feature type="mutagenesis site" description="No effect on proteolytic processing." evidence="8">
    <original>R</original>
    <variation>A</variation>
    <location>
        <position position="355"/>
    </location>
</feature>
<feature type="mutagenesis site" description="No effect on proteolytic processing." evidence="8">
    <original>R</original>
    <variation>A</variation>
    <location>
        <position position="358"/>
    </location>
</feature>
<feature type="mutagenesis site" description="No effect on proteolytic processing." evidence="8">
    <original>KVLK</original>
    <variation>AVLA</variation>
    <location>
        <begin position="371"/>
        <end position="374"/>
    </location>
</feature>
<feature type="mutagenesis site" description="No effect on proteolytic processing." evidence="8">
    <original>RRR</original>
    <variation>AAA</variation>
    <location>
        <begin position="387"/>
        <end position="389"/>
    </location>
</feature>
<feature type="mutagenesis site" description="No effect on proteolytic processing." evidence="8">
    <original>KLK</original>
    <variation>ALA</variation>
    <location>
        <begin position="394"/>
        <end position="396"/>
    </location>
</feature>
<feature type="strand" evidence="24">
    <location>
        <begin position="63"/>
        <end position="65"/>
    </location>
</feature>
<feature type="helix" evidence="24">
    <location>
        <begin position="75"/>
        <end position="133"/>
    </location>
</feature>
<feature type="helix" evidence="24">
    <location>
        <begin position="135"/>
        <end position="137"/>
    </location>
</feature>
<feature type="helix" evidence="24">
    <location>
        <begin position="140"/>
        <end position="156"/>
    </location>
</feature>
<feature type="helix" evidence="24">
    <location>
        <begin position="163"/>
        <end position="181"/>
    </location>
</feature>
<feature type="helix" evidence="24">
    <location>
        <begin position="195"/>
        <end position="204"/>
    </location>
</feature>
<feature type="turn" evidence="24">
    <location>
        <begin position="205"/>
        <end position="210"/>
    </location>
</feature>
<feature type="helix" evidence="24">
    <location>
        <begin position="211"/>
        <end position="243"/>
    </location>
</feature>
<feature type="helix" evidence="24">
    <location>
        <begin position="250"/>
        <end position="260"/>
    </location>
</feature>
<feature type="helix" evidence="24">
    <location>
        <begin position="262"/>
        <end position="265"/>
    </location>
</feature>
<feature type="helix" evidence="24">
    <location>
        <begin position="275"/>
        <end position="285"/>
    </location>
</feature>
<feature type="helix" evidence="24">
    <location>
        <begin position="287"/>
        <end position="290"/>
    </location>
</feature>
<feature type="helix" evidence="24">
    <location>
        <begin position="292"/>
        <end position="309"/>
    </location>
</feature>
<feature type="helix" evidence="24">
    <location>
        <begin position="316"/>
        <end position="321"/>
    </location>
</feature>
<feature type="helix" evidence="24">
    <location>
        <begin position="323"/>
        <end position="335"/>
    </location>
</feature>
<feature type="helix" evidence="24">
    <location>
        <begin position="338"/>
        <end position="348"/>
    </location>
</feature>
<feature type="helix" evidence="24">
    <location>
        <begin position="384"/>
        <end position="396"/>
    </location>
</feature>
<feature type="turn" evidence="24">
    <location>
        <begin position="397"/>
        <end position="403"/>
    </location>
</feature>
<feature type="helix" evidence="24">
    <location>
        <begin position="405"/>
        <end position="411"/>
    </location>
</feature>
<feature type="strand" evidence="24">
    <location>
        <begin position="420"/>
        <end position="423"/>
    </location>
</feature>
<feature type="strand" evidence="24">
    <location>
        <begin position="425"/>
        <end position="431"/>
    </location>
</feature>
<feature type="helix" evidence="24">
    <location>
        <begin position="457"/>
        <end position="474"/>
    </location>
</feature>
<evidence type="ECO:0000250" key="1">
    <source>
        <dbReference type="UniProtKB" id="P13265"/>
    </source>
</evidence>
<evidence type="ECO:0000250" key="2">
    <source>
        <dbReference type="UniProtKB" id="P35052"/>
    </source>
</evidence>
<evidence type="ECO:0000250" key="3">
    <source>
        <dbReference type="UniProtKB" id="Q6V9Y8"/>
    </source>
</evidence>
<evidence type="ECO:0000250" key="4">
    <source>
        <dbReference type="UniProtKB" id="Q8CFZ4"/>
    </source>
</evidence>
<evidence type="ECO:0000255" key="5"/>
<evidence type="ECO:0000269" key="6">
    <source>
    </source>
</evidence>
<evidence type="ECO:0000269" key="7">
    <source>
    </source>
</evidence>
<evidence type="ECO:0000269" key="8">
    <source>
    </source>
</evidence>
<evidence type="ECO:0000269" key="9">
    <source>
    </source>
</evidence>
<evidence type="ECO:0000269" key="10">
    <source>
    </source>
</evidence>
<evidence type="ECO:0000269" key="11">
    <source>
    </source>
</evidence>
<evidence type="ECO:0000269" key="12">
    <source>
    </source>
</evidence>
<evidence type="ECO:0000269" key="13">
    <source>
    </source>
</evidence>
<evidence type="ECO:0000269" key="14">
    <source>
    </source>
</evidence>
<evidence type="ECO:0000269" key="15">
    <source>
    </source>
</evidence>
<evidence type="ECO:0000269" key="16">
    <source>
    </source>
</evidence>
<evidence type="ECO:0000269" key="17">
    <source>
    </source>
</evidence>
<evidence type="ECO:0000269" key="18">
    <source>
    </source>
</evidence>
<evidence type="ECO:0000269" key="19">
    <source ref="4"/>
</evidence>
<evidence type="ECO:0000303" key="20">
    <source>
    </source>
</evidence>
<evidence type="ECO:0000303" key="21">
    <source ref="4"/>
</evidence>
<evidence type="ECO:0000305" key="22"/>
<evidence type="ECO:0000305" key="23">
    <source>
    </source>
</evidence>
<evidence type="ECO:0007829" key="24">
    <source>
        <dbReference type="PDB" id="7ZAW"/>
    </source>
</evidence>
<proteinExistence type="evidence at protein level"/>
<gene>
    <name type="primary">GPC3</name>
    <name type="synonym">OCI5</name>
</gene>
<comment type="function">
    <text evidence="3 4 8 11 12 13">Cell surface proteoglycan (PubMed:14610063). Negatively regulates the hedgehog signaling pathway when attached via the GPI-anchor to the cell surface by competing with the hedgehog receptor PTC1 for binding to hedgehog proteins (By similarity). Binding to the hedgehog protein SHH triggers internalization of the complex by endocytosis and its subsequent lysosomal degradation (By similarity). Positively regulates the canonical Wnt signaling pathway by binding to the Wnt receptor Frizzled and stimulating the binding of the Frizzled receptor to Wnt ligands (PubMed:16227623, PubMed:24496449). Positively regulates the non-canonical Wnt signaling pathway (By similarity). Binds to CD81 which decreases the availability of free CD81 for binding to the transcriptional repressor HHEX, resulting in nuclear translocation of HHEX and transcriptional repression (By similarity). Inhibits the dipeptidyl peptidase activity of DPP4 (PubMed:17549790). Plays a role in limb patterning and skeletal development by controlling the cellular response to BMP4 (By similarity). Modulates the effects of growth factors BMP2, BMP7 and FGF7 on renal branching morphogenesis (By similarity). Required for coronary vascular development (By similarity). Plays a role in regulating cell movements during gastrulation (By similarity).</text>
</comment>
<comment type="subunit">
    <text evidence="1 4 8 11 12 13">Heterodimer; disulfide-linked (PubMed:14610063). Cleavage by a furin-like convertase results in production of alpha and beta chains which form a disulfide-linked heterodimer (PubMed:14610063). Interacts with DPP4 (PubMed:17549790). Interacts with FGF2 (By similarity). Interacts with WNT5A (PubMed:14610063). Also interacts with WNT3A and WNT7B (PubMed:16227623). Interacts with hedgehog protein SHH; the heparan sulfate chains are not required for the interaction (By similarity). Also interacts with hedgehog protein IHH (By similarity). Interacts with CD81 (By similarity). Interacts with Wnt receptors FZD4, FZD7 and FZD8; the heparan sulfate chains are required for the interaction (PubMed:24496449).</text>
</comment>
<comment type="subcellular location">
    <subcellularLocation>
        <location evidence="8">Cell membrane</location>
        <topology evidence="1">Lipid-anchor</topology>
        <topology evidence="1">GPI-anchor</topology>
        <orientation evidence="1">Extracellular side</orientation>
    </subcellularLocation>
</comment>
<comment type="alternative products">
    <event type="alternative splicing"/>
    <isoform>
        <id>P51654-1</id>
        <name>1</name>
        <sequence type="displayed"/>
    </isoform>
    <isoform>
        <id>P51654-2</id>
        <name>2</name>
        <name>Variant B</name>
        <sequence type="described" ref="VSP_046117"/>
    </isoform>
    <isoform>
        <id>P51654-3</id>
        <name>3</name>
        <name>Variant C</name>
        <sequence type="described" ref="VSP_046703"/>
    </isoform>
</comment>
<comment type="tissue specificity">
    <text evidence="17 18">Detected in placenta (at protein level) (PubMed:32337544). Highly expressed in lung, liver and kidney.</text>
</comment>
<comment type="PTM">
    <text evidence="8 17">O-glycosylated; contains heparan sulfate and/or chondroitin sulfate.</text>
</comment>
<comment type="PTM">
    <text evidence="8 14">Cleaved intracellularly by a furin-like convertase to generate 2 subunits, alpha and beta, which remain associated through disulfide bonds and are associated with the cell surface via the GPI-anchor (PubMed:14610063). This processing is essential for its role in inhibition of hedgehog signaling (PubMed:25653284). A second proteolytic event may result in cleavage of the protein on the cell surface, separating it from the GPI-anchor and leading to its shedding from the cell surface (PubMed:14610063).</text>
</comment>
<comment type="disease" evidence="6">
    <disease id="DI-02307">
        <name>Simpson-Golabi-Behmel syndrome 1</name>
        <acronym>SGBS1</acronym>
        <description>A condition characterized by pre- and postnatal overgrowth (gigantism), facial dysmorphism and a variety of inconstant visceral and skeletal malformations. Characteristic dysmorphic features include macrocephaly with coarse, distinctive facies with a large protruding jaw, broad nasal bridge and cleft palate. Cardiac defects are frequent.</description>
        <dbReference type="MIM" id="312870"/>
    </disease>
    <text>The disease is caused by variants affecting the gene represented in this entry.</text>
</comment>
<comment type="miscellaneous">
    <text evidence="7 10 11">Used as a marker for hepatocellular carcinoma (HCC) as it is expressed in HCC but is not detectable in hepatocytes from normal or benign liver diseases (PubMed:12851874). When attached to the cell surface, stimulates the growth of HCC cells by increasing canonical Wnt signaling (PubMed:16024626). Cleavage is not required for stimulation of Wnt signaling or HCC growth (PubMed:16227623).</text>
</comment>
<comment type="similarity">
    <text evidence="22">Belongs to the glypican family.</text>
</comment>
<comment type="online information" name="Atlas of Genetics and Cytogenetics in Oncology and Haematology">
    <link uri="https://atlasgeneticsoncology.org/gene/156/GPC3"/>
</comment>
<organism>
    <name type="scientific">Homo sapiens</name>
    <name type="common">Human</name>
    <dbReference type="NCBI Taxonomy" id="9606"/>
    <lineage>
        <taxon>Eukaryota</taxon>
        <taxon>Metazoa</taxon>
        <taxon>Chordata</taxon>
        <taxon>Craniata</taxon>
        <taxon>Vertebrata</taxon>
        <taxon>Euteleostomi</taxon>
        <taxon>Mammalia</taxon>
        <taxon>Eutheria</taxon>
        <taxon>Euarchontoglires</taxon>
        <taxon>Primates</taxon>
        <taxon>Haplorrhini</taxon>
        <taxon>Catarrhini</taxon>
        <taxon>Hominidae</taxon>
        <taxon>Homo</taxon>
    </lineage>
</organism>